<keyword id="KW-0687">Ribonucleoprotein</keyword>
<keyword id="KW-0689">Ribosomal protein</keyword>
<comment type="similarity">
    <text evidence="1">Belongs to the bacterial ribosomal protein bL36 family.</text>
</comment>
<organism>
    <name type="scientific">Xylella fastidiosa (strain 9a5c)</name>
    <dbReference type="NCBI Taxonomy" id="160492"/>
    <lineage>
        <taxon>Bacteria</taxon>
        <taxon>Pseudomonadati</taxon>
        <taxon>Pseudomonadota</taxon>
        <taxon>Gammaproteobacteria</taxon>
        <taxon>Lysobacterales</taxon>
        <taxon>Lysobacteraceae</taxon>
        <taxon>Xylella</taxon>
    </lineage>
</organism>
<name>RL36_XYLFA</name>
<accession>Q9PAQ5</accession>
<reference key="1">
    <citation type="journal article" date="2000" name="Nature">
        <title>The genome sequence of the plant pathogen Xylella fastidiosa.</title>
        <authorList>
            <person name="Simpson A.J.G."/>
            <person name="Reinach F.C."/>
            <person name="Arruda P."/>
            <person name="Abreu F.A."/>
            <person name="Acencio M."/>
            <person name="Alvarenga R."/>
            <person name="Alves L.M.C."/>
            <person name="Araya J.E."/>
            <person name="Baia G.S."/>
            <person name="Baptista C.S."/>
            <person name="Barros M.H."/>
            <person name="Bonaccorsi E.D."/>
            <person name="Bordin S."/>
            <person name="Bove J.M."/>
            <person name="Briones M.R.S."/>
            <person name="Bueno M.R.P."/>
            <person name="Camargo A.A."/>
            <person name="Camargo L.E.A."/>
            <person name="Carraro D.M."/>
            <person name="Carrer H."/>
            <person name="Colauto N.B."/>
            <person name="Colombo C."/>
            <person name="Costa F.F."/>
            <person name="Costa M.C.R."/>
            <person name="Costa-Neto C.M."/>
            <person name="Coutinho L.L."/>
            <person name="Cristofani M."/>
            <person name="Dias-Neto E."/>
            <person name="Docena C."/>
            <person name="El-Dorry H."/>
            <person name="Facincani A.P."/>
            <person name="Ferreira A.J.S."/>
            <person name="Ferreira V.C.A."/>
            <person name="Ferro J.A."/>
            <person name="Fraga J.S."/>
            <person name="Franca S.C."/>
            <person name="Franco M.C."/>
            <person name="Frohme M."/>
            <person name="Furlan L.R."/>
            <person name="Garnier M."/>
            <person name="Goldman G.H."/>
            <person name="Goldman M.H.S."/>
            <person name="Gomes S.L."/>
            <person name="Gruber A."/>
            <person name="Ho P.L."/>
            <person name="Hoheisel J.D."/>
            <person name="Junqueira M.L."/>
            <person name="Kemper E.L."/>
            <person name="Kitajima J.P."/>
            <person name="Krieger J.E."/>
            <person name="Kuramae E.E."/>
            <person name="Laigret F."/>
            <person name="Lambais M.R."/>
            <person name="Leite L.C.C."/>
            <person name="Lemos E.G.M."/>
            <person name="Lemos M.V.F."/>
            <person name="Lopes S.A."/>
            <person name="Lopes C.R."/>
            <person name="Machado J.A."/>
            <person name="Machado M.A."/>
            <person name="Madeira A.M.B.N."/>
            <person name="Madeira H.M.F."/>
            <person name="Marino C.L."/>
            <person name="Marques M.V."/>
            <person name="Martins E.A.L."/>
            <person name="Martins E.M.F."/>
            <person name="Matsukuma A.Y."/>
            <person name="Menck C.F.M."/>
            <person name="Miracca E.C."/>
            <person name="Miyaki C.Y."/>
            <person name="Monteiro-Vitorello C.B."/>
            <person name="Moon D.H."/>
            <person name="Nagai M.A."/>
            <person name="Nascimento A.L.T.O."/>
            <person name="Netto L.E.S."/>
            <person name="Nhani A. Jr."/>
            <person name="Nobrega F.G."/>
            <person name="Nunes L.R."/>
            <person name="Oliveira M.A."/>
            <person name="de Oliveira M.C."/>
            <person name="de Oliveira R.C."/>
            <person name="Palmieri D.A."/>
            <person name="Paris A."/>
            <person name="Peixoto B.R."/>
            <person name="Pereira G.A.G."/>
            <person name="Pereira H.A. Jr."/>
            <person name="Pesquero J.B."/>
            <person name="Quaggio R.B."/>
            <person name="Roberto P.G."/>
            <person name="Rodrigues V."/>
            <person name="de Rosa A.J.M."/>
            <person name="de Rosa V.E. Jr."/>
            <person name="de Sa R.G."/>
            <person name="Santelli R.V."/>
            <person name="Sawasaki H.E."/>
            <person name="da Silva A.C.R."/>
            <person name="da Silva A.M."/>
            <person name="da Silva F.R."/>
            <person name="Silva W.A. Jr."/>
            <person name="da Silveira J.F."/>
            <person name="Silvestri M.L.Z."/>
            <person name="Siqueira W.J."/>
            <person name="de Souza A.A."/>
            <person name="de Souza A.P."/>
            <person name="Terenzi M.F."/>
            <person name="Truffi D."/>
            <person name="Tsai S.M."/>
            <person name="Tsuhako M.H."/>
            <person name="Vallada H."/>
            <person name="Van Sluys M.A."/>
            <person name="Verjovski-Almeida S."/>
            <person name="Vettore A.L."/>
            <person name="Zago M.A."/>
            <person name="Zatz M."/>
            <person name="Meidanis J."/>
            <person name="Setubal J.C."/>
        </authorList>
    </citation>
    <scope>NUCLEOTIDE SEQUENCE [LARGE SCALE GENOMIC DNA]</scope>
    <source>
        <strain>9a5c</strain>
    </source>
</reference>
<protein>
    <recommendedName>
        <fullName evidence="1">Large ribosomal subunit protein bL36</fullName>
    </recommendedName>
    <alternativeName>
        <fullName evidence="2">50S ribosomal protein L36</fullName>
    </alternativeName>
</protein>
<proteinExistence type="inferred from homology"/>
<evidence type="ECO:0000255" key="1">
    <source>
        <dbReference type="HAMAP-Rule" id="MF_00251"/>
    </source>
</evidence>
<evidence type="ECO:0000305" key="2"/>
<feature type="chain" id="PRO_0000126300" description="Large ribosomal subunit protein bL36">
    <location>
        <begin position="1"/>
        <end position="41"/>
    </location>
</feature>
<gene>
    <name evidence="1" type="primary">rpmJ</name>
    <name type="ordered locus">XF_2440</name>
</gene>
<dbReference type="EMBL" id="AE003849">
    <property type="protein sequence ID" value="AAF85239.1"/>
    <property type="molecule type" value="Genomic_DNA"/>
</dbReference>
<dbReference type="PIR" id="E82556">
    <property type="entry name" value="E82556"/>
</dbReference>
<dbReference type="SMR" id="Q9PAQ5"/>
<dbReference type="STRING" id="160492.XF_2440"/>
<dbReference type="KEGG" id="xfa:XF_2440"/>
<dbReference type="eggNOG" id="COG0257">
    <property type="taxonomic scope" value="Bacteria"/>
</dbReference>
<dbReference type="HOGENOM" id="CLU_135723_3_3_6"/>
<dbReference type="Proteomes" id="UP000000812">
    <property type="component" value="Chromosome"/>
</dbReference>
<dbReference type="GO" id="GO:1990904">
    <property type="term" value="C:ribonucleoprotein complex"/>
    <property type="evidence" value="ECO:0007669"/>
    <property type="project" value="UniProtKB-KW"/>
</dbReference>
<dbReference type="GO" id="GO:0005840">
    <property type="term" value="C:ribosome"/>
    <property type="evidence" value="ECO:0007669"/>
    <property type="project" value="UniProtKB-KW"/>
</dbReference>
<dbReference type="GO" id="GO:0003735">
    <property type="term" value="F:structural constituent of ribosome"/>
    <property type="evidence" value="ECO:0007669"/>
    <property type="project" value="InterPro"/>
</dbReference>
<dbReference type="GO" id="GO:0006412">
    <property type="term" value="P:translation"/>
    <property type="evidence" value="ECO:0007669"/>
    <property type="project" value="UniProtKB-UniRule"/>
</dbReference>
<dbReference type="HAMAP" id="MF_00251">
    <property type="entry name" value="Ribosomal_bL36"/>
    <property type="match status" value="1"/>
</dbReference>
<dbReference type="InterPro" id="IPR000473">
    <property type="entry name" value="Ribosomal_bL36"/>
</dbReference>
<dbReference type="InterPro" id="IPR035977">
    <property type="entry name" value="Ribosomal_bL36_sp"/>
</dbReference>
<dbReference type="InterPro" id="IPR047621">
    <property type="entry name" value="Ribosomal_L36_bact"/>
</dbReference>
<dbReference type="NCBIfam" id="NF002021">
    <property type="entry name" value="PRK00831.1"/>
    <property type="match status" value="1"/>
</dbReference>
<dbReference type="NCBIfam" id="TIGR01022">
    <property type="entry name" value="rpmJ_bact"/>
    <property type="match status" value="1"/>
</dbReference>
<dbReference type="PANTHER" id="PTHR47781">
    <property type="entry name" value="50S RIBOSOMAL PROTEIN L36 2"/>
    <property type="match status" value="1"/>
</dbReference>
<dbReference type="PANTHER" id="PTHR47781:SF1">
    <property type="entry name" value="LARGE RIBOSOMAL SUBUNIT PROTEIN BL36B"/>
    <property type="match status" value="1"/>
</dbReference>
<dbReference type="Pfam" id="PF00444">
    <property type="entry name" value="Ribosomal_L36"/>
    <property type="match status" value="1"/>
</dbReference>
<dbReference type="SUPFAM" id="SSF57840">
    <property type="entry name" value="Ribosomal protein L36"/>
    <property type="match status" value="1"/>
</dbReference>
<dbReference type="PROSITE" id="PS00828">
    <property type="entry name" value="RIBOSOMAL_L36"/>
    <property type="match status" value="1"/>
</dbReference>
<sequence length="41" mass="4900">MKVLSSLKSAKTRHRDCKVIRRRGKIFVICKSNPRFKARQR</sequence>